<proteinExistence type="inferred from homology"/>
<sequence length="56" mass="6327">MAVPARRTSKAKKNKRRTHKGLTAPGLSRDSETGEYRMSHRISPDGTYKGRTIIEK</sequence>
<accession>Q92EH1</accession>
<protein>
    <recommendedName>
        <fullName evidence="1">Large ribosomal subunit protein bL32A</fullName>
    </recommendedName>
    <alternativeName>
        <fullName evidence="3">50S ribosomal protein L32 1</fullName>
    </alternativeName>
</protein>
<comment type="similarity">
    <text evidence="3">Belongs to the bacterial ribosomal protein bL32 family.</text>
</comment>
<gene>
    <name type="primary">rpmF1</name>
    <name type="ordered locus">lin0489</name>
</gene>
<name>RL321_LISIN</name>
<feature type="chain" id="PRO_0000172357" description="Large ribosomal subunit protein bL32A">
    <location>
        <begin position="1"/>
        <end position="56"/>
    </location>
</feature>
<feature type="region of interest" description="Disordered" evidence="2">
    <location>
        <begin position="1"/>
        <end position="56"/>
    </location>
</feature>
<feature type="compositionally biased region" description="Basic residues" evidence="2">
    <location>
        <begin position="7"/>
        <end position="20"/>
    </location>
</feature>
<feature type="compositionally biased region" description="Basic and acidic residues" evidence="2">
    <location>
        <begin position="29"/>
        <end position="38"/>
    </location>
</feature>
<keyword id="KW-0687">Ribonucleoprotein</keyword>
<keyword id="KW-0689">Ribosomal protein</keyword>
<evidence type="ECO:0000255" key="1">
    <source>
        <dbReference type="HAMAP-Rule" id="MF_00340"/>
    </source>
</evidence>
<evidence type="ECO:0000256" key="2">
    <source>
        <dbReference type="SAM" id="MobiDB-lite"/>
    </source>
</evidence>
<evidence type="ECO:0000305" key="3"/>
<organism>
    <name type="scientific">Listeria innocua serovar 6a (strain ATCC BAA-680 / CLIP 11262)</name>
    <dbReference type="NCBI Taxonomy" id="272626"/>
    <lineage>
        <taxon>Bacteria</taxon>
        <taxon>Bacillati</taxon>
        <taxon>Bacillota</taxon>
        <taxon>Bacilli</taxon>
        <taxon>Bacillales</taxon>
        <taxon>Listeriaceae</taxon>
        <taxon>Listeria</taxon>
    </lineage>
</organism>
<reference key="1">
    <citation type="journal article" date="2001" name="Science">
        <title>Comparative genomics of Listeria species.</title>
        <authorList>
            <person name="Glaser P."/>
            <person name="Frangeul L."/>
            <person name="Buchrieser C."/>
            <person name="Rusniok C."/>
            <person name="Amend A."/>
            <person name="Baquero F."/>
            <person name="Berche P."/>
            <person name="Bloecker H."/>
            <person name="Brandt P."/>
            <person name="Chakraborty T."/>
            <person name="Charbit A."/>
            <person name="Chetouani F."/>
            <person name="Couve E."/>
            <person name="de Daruvar A."/>
            <person name="Dehoux P."/>
            <person name="Domann E."/>
            <person name="Dominguez-Bernal G."/>
            <person name="Duchaud E."/>
            <person name="Durant L."/>
            <person name="Dussurget O."/>
            <person name="Entian K.-D."/>
            <person name="Fsihi H."/>
            <person name="Garcia-del Portillo F."/>
            <person name="Garrido P."/>
            <person name="Gautier L."/>
            <person name="Goebel W."/>
            <person name="Gomez-Lopez N."/>
            <person name="Hain T."/>
            <person name="Hauf J."/>
            <person name="Jackson D."/>
            <person name="Jones L.-M."/>
            <person name="Kaerst U."/>
            <person name="Kreft J."/>
            <person name="Kuhn M."/>
            <person name="Kunst F."/>
            <person name="Kurapkat G."/>
            <person name="Madueno E."/>
            <person name="Maitournam A."/>
            <person name="Mata Vicente J."/>
            <person name="Ng E."/>
            <person name="Nedjari H."/>
            <person name="Nordsiek G."/>
            <person name="Novella S."/>
            <person name="de Pablos B."/>
            <person name="Perez-Diaz J.-C."/>
            <person name="Purcell R."/>
            <person name="Remmel B."/>
            <person name="Rose M."/>
            <person name="Schlueter T."/>
            <person name="Simoes N."/>
            <person name="Tierrez A."/>
            <person name="Vazquez-Boland J.-A."/>
            <person name="Voss H."/>
            <person name="Wehland J."/>
            <person name="Cossart P."/>
        </authorList>
    </citation>
    <scope>NUCLEOTIDE SEQUENCE [LARGE SCALE GENOMIC DNA]</scope>
    <source>
        <strain>ATCC BAA-680 / CLIP 11262</strain>
    </source>
</reference>
<dbReference type="EMBL" id="AL596165">
    <property type="protein sequence ID" value="CAC95721.1"/>
    <property type="molecule type" value="Genomic_DNA"/>
</dbReference>
<dbReference type="PIR" id="AI1493">
    <property type="entry name" value="AI1493"/>
</dbReference>
<dbReference type="SMR" id="Q92EH1"/>
<dbReference type="STRING" id="272626.gene:17564815"/>
<dbReference type="KEGG" id="lin:rpmF.1"/>
<dbReference type="eggNOG" id="COG0333">
    <property type="taxonomic scope" value="Bacteria"/>
</dbReference>
<dbReference type="HOGENOM" id="CLU_129084_1_3_9"/>
<dbReference type="OrthoDB" id="9812874at2"/>
<dbReference type="Proteomes" id="UP000002513">
    <property type="component" value="Chromosome"/>
</dbReference>
<dbReference type="GO" id="GO:0015934">
    <property type="term" value="C:large ribosomal subunit"/>
    <property type="evidence" value="ECO:0007669"/>
    <property type="project" value="InterPro"/>
</dbReference>
<dbReference type="GO" id="GO:0003735">
    <property type="term" value="F:structural constituent of ribosome"/>
    <property type="evidence" value="ECO:0007669"/>
    <property type="project" value="InterPro"/>
</dbReference>
<dbReference type="GO" id="GO:0006412">
    <property type="term" value="P:translation"/>
    <property type="evidence" value="ECO:0007669"/>
    <property type="project" value="UniProtKB-UniRule"/>
</dbReference>
<dbReference type="HAMAP" id="MF_00340">
    <property type="entry name" value="Ribosomal_bL32"/>
    <property type="match status" value="1"/>
</dbReference>
<dbReference type="InterPro" id="IPR002677">
    <property type="entry name" value="Ribosomal_bL32"/>
</dbReference>
<dbReference type="InterPro" id="IPR044957">
    <property type="entry name" value="Ribosomal_bL32_bact"/>
</dbReference>
<dbReference type="InterPro" id="IPR011332">
    <property type="entry name" value="Ribosomal_zn-bd"/>
</dbReference>
<dbReference type="NCBIfam" id="TIGR01031">
    <property type="entry name" value="rpmF_bact"/>
    <property type="match status" value="1"/>
</dbReference>
<dbReference type="PANTHER" id="PTHR35534">
    <property type="entry name" value="50S RIBOSOMAL PROTEIN L32"/>
    <property type="match status" value="1"/>
</dbReference>
<dbReference type="PANTHER" id="PTHR35534:SF1">
    <property type="entry name" value="LARGE RIBOSOMAL SUBUNIT PROTEIN BL32"/>
    <property type="match status" value="1"/>
</dbReference>
<dbReference type="Pfam" id="PF01783">
    <property type="entry name" value="Ribosomal_L32p"/>
    <property type="match status" value="1"/>
</dbReference>
<dbReference type="SUPFAM" id="SSF57829">
    <property type="entry name" value="Zn-binding ribosomal proteins"/>
    <property type="match status" value="1"/>
</dbReference>